<protein>
    <recommendedName>
        <fullName evidence="1">Large ribosomal subunit protein bL36</fullName>
    </recommendedName>
    <alternativeName>
        <fullName evidence="2">50S ribosomal protein L36</fullName>
    </alternativeName>
</protein>
<comment type="similarity">
    <text evidence="1">Belongs to the bacterial ribosomal protein bL36 family.</text>
</comment>
<evidence type="ECO:0000255" key="1">
    <source>
        <dbReference type="HAMAP-Rule" id="MF_00251"/>
    </source>
</evidence>
<evidence type="ECO:0000305" key="2"/>
<reference key="1">
    <citation type="submission" date="2008-10" db="EMBL/GenBank/DDBJ databases">
        <title>Genome sequence of Bacillus anthracis str. CDC 684.</title>
        <authorList>
            <person name="Dodson R.J."/>
            <person name="Munk A.C."/>
            <person name="Brettin T."/>
            <person name="Bruce D."/>
            <person name="Detter C."/>
            <person name="Tapia R."/>
            <person name="Han C."/>
            <person name="Sutton G."/>
            <person name="Sims D."/>
        </authorList>
    </citation>
    <scope>NUCLEOTIDE SEQUENCE [LARGE SCALE GENOMIC DNA]</scope>
    <source>
        <strain>CDC 684 / NRRL 3495</strain>
    </source>
</reference>
<keyword id="KW-0687">Ribonucleoprotein</keyword>
<keyword id="KW-0689">Ribosomal protein</keyword>
<feature type="chain" id="PRO_1000196162" description="Large ribosomal subunit protein bL36">
    <location>
        <begin position="1"/>
        <end position="37"/>
    </location>
</feature>
<accession>C3LJA6</accession>
<proteinExistence type="inferred from homology"/>
<dbReference type="EMBL" id="CP001215">
    <property type="protein sequence ID" value="ACP12509.1"/>
    <property type="molecule type" value="Genomic_DNA"/>
</dbReference>
<dbReference type="RefSeq" id="WP_000868344.1">
    <property type="nucleotide sequence ID" value="NC_012581.1"/>
</dbReference>
<dbReference type="SMR" id="C3LJA6"/>
<dbReference type="GeneID" id="97822099"/>
<dbReference type="KEGG" id="bah:BAMEG_0150"/>
<dbReference type="HOGENOM" id="CLU_135723_6_2_9"/>
<dbReference type="GO" id="GO:0005737">
    <property type="term" value="C:cytoplasm"/>
    <property type="evidence" value="ECO:0007669"/>
    <property type="project" value="UniProtKB-ARBA"/>
</dbReference>
<dbReference type="GO" id="GO:1990904">
    <property type="term" value="C:ribonucleoprotein complex"/>
    <property type="evidence" value="ECO:0007669"/>
    <property type="project" value="UniProtKB-KW"/>
</dbReference>
<dbReference type="GO" id="GO:0005840">
    <property type="term" value="C:ribosome"/>
    <property type="evidence" value="ECO:0007669"/>
    <property type="project" value="UniProtKB-KW"/>
</dbReference>
<dbReference type="GO" id="GO:0003735">
    <property type="term" value="F:structural constituent of ribosome"/>
    <property type="evidence" value="ECO:0007669"/>
    <property type="project" value="InterPro"/>
</dbReference>
<dbReference type="GO" id="GO:0006412">
    <property type="term" value="P:translation"/>
    <property type="evidence" value="ECO:0007669"/>
    <property type="project" value="UniProtKB-UniRule"/>
</dbReference>
<dbReference type="HAMAP" id="MF_00251">
    <property type="entry name" value="Ribosomal_bL36"/>
    <property type="match status" value="1"/>
</dbReference>
<dbReference type="InterPro" id="IPR000473">
    <property type="entry name" value="Ribosomal_bL36"/>
</dbReference>
<dbReference type="InterPro" id="IPR035977">
    <property type="entry name" value="Ribosomal_bL36_sp"/>
</dbReference>
<dbReference type="NCBIfam" id="TIGR01022">
    <property type="entry name" value="rpmJ_bact"/>
    <property type="match status" value="1"/>
</dbReference>
<dbReference type="PANTHER" id="PTHR42888">
    <property type="entry name" value="50S RIBOSOMAL PROTEIN L36, CHLOROPLASTIC"/>
    <property type="match status" value="1"/>
</dbReference>
<dbReference type="PANTHER" id="PTHR42888:SF1">
    <property type="entry name" value="LARGE RIBOSOMAL SUBUNIT PROTEIN BL36C"/>
    <property type="match status" value="1"/>
</dbReference>
<dbReference type="Pfam" id="PF00444">
    <property type="entry name" value="Ribosomal_L36"/>
    <property type="match status" value="1"/>
</dbReference>
<dbReference type="SUPFAM" id="SSF57840">
    <property type="entry name" value="Ribosomal protein L36"/>
    <property type="match status" value="1"/>
</dbReference>
<dbReference type="PROSITE" id="PS00828">
    <property type="entry name" value="RIBOSOMAL_L36"/>
    <property type="match status" value="1"/>
</dbReference>
<gene>
    <name evidence="1" type="primary">rpmJ</name>
    <name type="ordered locus">BAMEG_0150</name>
</gene>
<organism>
    <name type="scientific">Bacillus anthracis (strain CDC 684 / NRRL 3495)</name>
    <dbReference type="NCBI Taxonomy" id="568206"/>
    <lineage>
        <taxon>Bacteria</taxon>
        <taxon>Bacillati</taxon>
        <taxon>Bacillota</taxon>
        <taxon>Bacilli</taxon>
        <taxon>Bacillales</taxon>
        <taxon>Bacillaceae</taxon>
        <taxon>Bacillus</taxon>
        <taxon>Bacillus cereus group</taxon>
    </lineage>
</organism>
<sequence>MKVRPSVKPICEKCKVIRRRGKVMVICENPKHKQKQG</sequence>
<name>RL36_BACAC</name>